<comment type="subcellular location">
    <subcellularLocation>
        <location evidence="2">Cell membrane</location>
        <topology evidence="2">Multi-pass membrane protein</topology>
    </subcellularLocation>
</comment>
<comment type="similarity">
    <text evidence="2">Belongs to the autoinducer-2 exporter (AI-2E) (TC 2.A.86) family.</text>
</comment>
<name>YDBI_BACSU</name>
<reference key="1">
    <citation type="submission" date="1997-03" db="EMBL/GenBank/DDBJ databases">
        <title>A 148 kbp sequence of the region between 35 and 47 degree of the Bacillus subtilis genome.</title>
        <authorList>
            <person name="Kasahara Y."/>
            <person name="Nakai S."/>
            <person name="Lee S."/>
            <person name="Sadaie Y."/>
            <person name="Ogasawara N."/>
        </authorList>
    </citation>
    <scope>NUCLEOTIDE SEQUENCE [GENOMIC DNA]</scope>
    <source>
        <strain>168</strain>
    </source>
</reference>
<reference key="2">
    <citation type="journal article" date="1997" name="Nature">
        <title>The complete genome sequence of the Gram-positive bacterium Bacillus subtilis.</title>
        <authorList>
            <person name="Kunst F."/>
            <person name="Ogasawara N."/>
            <person name="Moszer I."/>
            <person name="Albertini A.M."/>
            <person name="Alloni G."/>
            <person name="Azevedo V."/>
            <person name="Bertero M.G."/>
            <person name="Bessieres P."/>
            <person name="Bolotin A."/>
            <person name="Borchert S."/>
            <person name="Borriss R."/>
            <person name="Boursier L."/>
            <person name="Brans A."/>
            <person name="Braun M."/>
            <person name="Brignell S.C."/>
            <person name="Bron S."/>
            <person name="Brouillet S."/>
            <person name="Bruschi C.V."/>
            <person name="Caldwell B."/>
            <person name="Capuano V."/>
            <person name="Carter N.M."/>
            <person name="Choi S.-K."/>
            <person name="Codani J.-J."/>
            <person name="Connerton I.F."/>
            <person name="Cummings N.J."/>
            <person name="Daniel R.A."/>
            <person name="Denizot F."/>
            <person name="Devine K.M."/>
            <person name="Duesterhoeft A."/>
            <person name="Ehrlich S.D."/>
            <person name="Emmerson P.T."/>
            <person name="Entian K.-D."/>
            <person name="Errington J."/>
            <person name="Fabret C."/>
            <person name="Ferrari E."/>
            <person name="Foulger D."/>
            <person name="Fritz C."/>
            <person name="Fujita M."/>
            <person name="Fujita Y."/>
            <person name="Fuma S."/>
            <person name="Galizzi A."/>
            <person name="Galleron N."/>
            <person name="Ghim S.-Y."/>
            <person name="Glaser P."/>
            <person name="Goffeau A."/>
            <person name="Golightly E.J."/>
            <person name="Grandi G."/>
            <person name="Guiseppi G."/>
            <person name="Guy B.J."/>
            <person name="Haga K."/>
            <person name="Haiech J."/>
            <person name="Harwood C.R."/>
            <person name="Henaut A."/>
            <person name="Hilbert H."/>
            <person name="Holsappel S."/>
            <person name="Hosono S."/>
            <person name="Hullo M.-F."/>
            <person name="Itaya M."/>
            <person name="Jones L.-M."/>
            <person name="Joris B."/>
            <person name="Karamata D."/>
            <person name="Kasahara Y."/>
            <person name="Klaerr-Blanchard M."/>
            <person name="Klein C."/>
            <person name="Kobayashi Y."/>
            <person name="Koetter P."/>
            <person name="Koningstein G."/>
            <person name="Krogh S."/>
            <person name="Kumano M."/>
            <person name="Kurita K."/>
            <person name="Lapidus A."/>
            <person name="Lardinois S."/>
            <person name="Lauber J."/>
            <person name="Lazarevic V."/>
            <person name="Lee S.-M."/>
            <person name="Levine A."/>
            <person name="Liu H."/>
            <person name="Masuda S."/>
            <person name="Mauel C."/>
            <person name="Medigue C."/>
            <person name="Medina N."/>
            <person name="Mellado R.P."/>
            <person name="Mizuno M."/>
            <person name="Moestl D."/>
            <person name="Nakai S."/>
            <person name="Noback M."/>
            <person name="Noone D."/>
            <person name="O'Reilly M."/>
            <person name="Ogawa K."/>
            <person name="Ogiwara A."/>
            <person name="Oudega B."/>
            <person name="Park S.-H."/>
            <person name="Parro V."/>
            <person name="Pohl T.M."/>
            <person name="Portetelle D."/>
            <person name="Porwollik S."/>
            <person name="Prescott A.M."/>
            <person name="Presecan E."/>
            <person name="Pujic P."/>
            <person name="Purnelle B."/>
            <person name="Rapoport G."/>
            <person name="Rey M."/>
            <person name="Reynolds S."/>
            <person name="Rieger M."/>
            <person name="Rivolta C."/>
            <person name="Rocha E."/>
            <person name="Roche B."/>
            <person name="Rose M."/>
            <person name="Sadaie Y."/>
            <person name="Sato T."/>
            <person name="Scanlan E."/>
            <person name="Schleich S."/>
            <person name="Schroeter R."/>
            <person name="Scoffone F."/>
            <person name="Sekiguchi J."/>
            <person name="Sekowska A."/>
            <person name="Seror S.J."/>
            <person name="Serror P."/>
            <person name="Shin B.-S."/>
            <person name="Soldo B."/>
            <person name="Sorokin A."/>
            <person name="Tacconi E."/>
            <person name="Takagi T."/>
            <person name="Takahashi H."/>
            <person name="Takemaru K."/>
            <person name="Takeuchi M."/>
            <person name="Tamakoshi A."/>
            <person name="Tanaka T."/>
            <person name="Terpstra P."/>
            <person name="Tognoni A."/>
            <person name="Tosato V."/>
            <person name="Uchiyama S."/>
            <person name="Vandenbol M."/>
            <person name="Vannier F."/>
            <person name="Vassarotti A."/>
            <person name="Viari A."/>
            <person name="Wambutt R."/>
            <person name="Wedler E."/>
            <person name="Wedler H."/>
            <person name="Weitzenegger T."/>
            <person name="Winters P."/>
            <person name="Wipat A."/>
            <person name="Yamamoto H."/>
            <person name="Yamane K."/>
            <person name="Yasumoto K."/>
            <person name="Yata K."/>
            <person name="Yoshida K."/>
            <person name="Yoshikawa H.-F."/>
            <person name="Zumstein E."/>
            <person name="Yoshikawa H."/>
            <person name="Danchin A."/>
        </authorList>
    </citation>
    <scope>NUCLEOTIDE SEQUENCE [LARGE SCALE GENOMIC DNA]</scope>
    <source>
        <strain>168</strain>
    </source>
</reference>
<accession>P96604</accession>
<feature type="chain" id="PRO_0000148306" description="Putative transport protein YdbI">
    <location>
        <begin position="1"/>
        <end position="350"/>
    </location>
</feature>
<feature type="transmembrane region" description="Helical" evidence="1">
    <location>
        <begin position="18"/>
        <end position="38"/>
    </location>
</feature>
<feature type="transmembrane region" description="Helical" evidence="1">
    <location>
        <begin position="67"/>
        <end position="87"/>
    </location>
</feature>
<feature type="transmembrane region" description="Helical" evidence="1">
    <location>
        <begin position="145"/>
        <end position="165"/>
    </location>
</feature>
<feature type="transmembrane region" description="Helical" evidence="1">
    <location>
        <begin position="207"/>
        <end position="227"/>
    </location>
</feature>
<feature type="transmembrane region" description="Helical" evidence="1">
    <location>
        <begin position="229"/>
        <end position="249"/>
    </location>
</feature>
<feature type="transmembrane region" description="Helical" evidence="1">
    <location>
        <begin position="257"/>
        <end position="277"/>
    </location>
</feature>
<feature type="transmembrane region" description="Helical" evidence="1">
    <location>
        <begin position="289"/>
        <end position="309"/>
    </location>
</feature>
<feature type="transmembrane region" description="Helical" evidence="1">
    <location>
        <begin position="311"/>
        <end position="331"/>
    </location>
</feature>
<protein>
    <recommendedName>
        <fullName>Putative transport protein YdbI</fullName>
    </recommendedName>
</protein>
<keyword id="KW-1003">Cell membrane</keyword>
<keyword id="KW-0472">Membrane</keyword>
<keyword id="KW-1185">Reference proteome</keyword>
<keyword id="KW-0812">Transmembrane</keyword>
<keyword id="KW-1133">Transmembrane helix</keyword>
<keyword id="KW-0813">Transport</keyword>
<dbReference type="EMBL" id="AB001488">
    <property type="protein sequence ID" value="BAA19285.1"/>
    <property type="molecule type" value="Genomic_DNA"/>
</dbReference>
<dbReference type="EMBL" id="AL009126">
    <property type="protein sequence ID" value="CAB12255.1"/>
    <property type="molecule type" value="Genomic_DNA"/>
</dbReference>
<dbReference type="PIR" id="D69771">
    <property type="entry name" value="D69771"/>
</dbReference>
<dbReference type="RefSeq" id="NP_388329.1">
    <property type="nucleotide sequence ID" value="NC_000964.3"/>
</dbReference>
<dbReference type="RefSeq" id="WP_003246523.1">
    <property type="nucleotide sequence ID" value="NZ_OZ025638.1"/>
</dbReference>
<dbReference type="FunCoup" id="P96604">
    <property type="interactions" value="7"/>
</dbReference>
<dbReference type="IntAct" id="P96604">
    <property type="interactions" value="16"/>
</dbReference>
<dbReference type="STRING" id="224308.BSU04480"/>
<dbReference type="PaxDb" id="224308-BSU04480"/>
<dbReference type="DNASU" id="939948"/>
<dbReference type="EnsemblBacteria" id="CAB12255">
    <property type="protein sequence ID" value="CAB12255"/>
    <property type="gene ID" value="BSU_04480"/>
</dbReference>
<dbReference type="GeneID" id="939948"/>
<dbReference type="KEGG" id="bsu:BSU04480"/>
<dbReference type="PATRIC" id="fig|224308.179.peg.474"/>
<dbReference type="eggNOG" id="COG0628">
    <property type="taxonomic scope" value="Bacteria"/>
</dbReference>
<dbReference type="InParanoid" id="P96604"/>
<dbReference type="OrthoDB" id="9772136at2"/>
<dbReference type="PhylomeDB" id="P96604"/>
<dbReference type="BioCyc" id="BSUB:BSU04480-MONOMER"/>
<dbReference type="Proteomes" id="UP000001570">
    <property type="component" value="Chromosome"/>
</dbReference>
<dbReference type="GO" id="GO:0005886">
    <property type="term" value="C:plasma membrane"/>
    <property type="evidence" value="ECO:0007669"/>
    <property type="project" value="UniProtKB-SubCell"/>
</dbReference>
<dbReference type="GO" id="GO:0055085">
    <property type="term" value="P:transmembrane transport"/>
    <property type="evidence" value="ECO:0000318"/>
    <property type="project" value="GO_Central"/>
</dbReference>
<dbReference type="InterPro" id="IPR002549">
    <property type="entry name" value="AI-2E-like"/>
</dbReference>
<dbReference type="PANTHER" id="PTHR21716">
    <property type="entry name" value="TRANSMEMBRANE PROTEIN"/>
    <property type="match status" value="1"/>
</dbReference>
<dbReference type="PANTHER" id="PTHR21716:SF62">
    <property type="entry name" value="TRANSPORT PROTEIN YDBI-RELATED"/>
    <property type="match status" value="1"/>
</dbReference>
<dbReference type="Pfam" id="PF01594">
    <property type="entry name" value="AI-2E_transport"/>
    <property type="match status" value="1"/>
</dbReference>
<evidence type="ECO:0000255" key="1"/>
<evidence type="ECO:0000305" key="2"/>
<organism>
    <name type="scientific">Bacillus subtilis (strain 168)</name>
    <dbReference type="NCBI Taxonomy" id="224308"/>
    <lineage>
        <taxon>Bacteria</taxon>
        <taxon>Bacillati</taxon>
        <taxon>Bacillota</taxon>
        <taxon>Bacilli</taxon>
        <taxon>Bacillales</taxon>
        <taxon>Bacillaceae</taxon>
        <taxon>Bacillus</taxon>
    </lineage>
</organism>
<proteinExistence type="inferred from homology"/>
<sequence length="350" mass="40073">MAALVKFFQHPGVRRFSIFVVLTGVLYLFKSMINLILLTFIFTFLMDRLELVVRQFVSQFFRVSQRVVITFLYMLLAVLLTVGGFVFYPVVAAQIQQLVKQIKHIAYHPDSIPFFDEITSVFGDINISSYVKEGFNVVYTYLADISTFGLQVVMALILSMFFLFEKKRLSEFMAKFKTSKLRVFYEEIAFFGSKFARTFGKVLEAQFIIALVNCILTFIALWIMHFPQLFGLSIMVFFLGLIPVAGVVISLIPLSIIAYSTGGGMYVLYIVLVIFAIHAIETYFLNPKLMSAKTELPIFFTFTVLIFSEHFFGIWGLIIGIPIFVFLLDILDVTNKEDRSKGPRENSDKK</sequence>
<gene>
    <name type="primary">ydbI</name>
    <name type="ordered locus">BSU04480</name>
</gene>